<proteinExistence type="evidence at transcript level"/>
<feature type="initiator methionine" description="Removed" evidence="2">
    <location>
        <position position="1"/>
    </location>
</feature>
<feature type="chain" id="PRO_0000358596" description="Keratin-associated protein 3-2">
    <location>
        <begin position="2"/>
        <end position="98"/>
    </location>
</feature>
<feature type="repeat" description="1" evidence="4">
    <location>
        <begin position="3"/>
        <end position="7"/>
    </location>
</feature>
<feature type="repeat" description="2" evidence="4">
    <location>
        <begin position="8"/>
        <end position="12"/>
    </location>
</feature>
<feature type="repeat" description="3" evidence="4">
    <location>
        <begin position="47"/>
        <end position="51"/>
    </location>
</feature>
<feature type="region of interest" description="3 X 5 AA repeats of C-C-X(3)" evidence="4">
    <location>
        <begin position="3"/>
        <end position="59"/>
    </location>
</feature>
<feature type="modified residue" description="N-acetylalanine" evidence="2">
    <location>
        <position position="2"/>
    </location>
</feature>
<feature type="sequence conflict" description="In Ref. 1; AAA31540." evidence="8" ref="1">
    <original>T</original>
    <variation>S</variation>
    <location>
        <position position="35"/>
    </location>
</feature>
<feature type="sequence conflict" description="In Ref. 1; AAA31540." evidence="8" ref="1">
    <original>G</original>
    <variation>R</variation>
    <location>
        <position position="76"/>
    </location>
</feature>
<feature type="sequence conflict" description="In Ref. 1; AAA31540." evidence="8" ref="1">
    <original>G</original>
    <variation>R</variation>
    <location>
        <position position="89"/>
    </location>
</feature>
<organism>
    <name type="scientific">Ovis aries</name>
    <name type="common">Sheep</name>
    <dbReference type="NCBI Taxonomy" id="9940"/>
    <lineage>
        <taxon>Eukaryota</taxon>
        <taxon>Metazoa</taxon>
        <taxon>Chordata</taxon>
        <taxon>Craniata</taxon>
        <taxon>Vertebrata</taxon>
        <taxon>Euteleostomi</taxon>
        <taxon>Mammalia</taxon>
        <taxon>Eutheria</taxon>
        <taxon>Laurasiatheria</taxon>
        <taxon>Artiodactyla</taxon>
        <taxon>Ruminantia</taxon>
        <taxon>Pecora</taxon>
        <taxon>Bovidae</taxon>
        <taxon>Caprinae</taxon>
        <taxon>Ovis</taxon>
    </lineage>
</organism>
<gene>
    <name evidence="10" type="primary">KAP3.2</name>
    <name evidence="7" type="synonym">BIIIB2</name>
</gene>
<reference evidence="9" key="1">
    <citation type="journal article" date="1989" name="Genomics">
        <title>The keratin BIIIB gene family: isolation of cDNA clones and structure of a gene and a related pseudogene.</title>
        <authorList>
            <person name="Frenkel M.J."/>
            <person name="Powell B.C."/>
            <person name="Ward K.A."/>
            <person name="Sleigh M.J."/>
            <person name="Rogers G.E."/>
        </authorList>
    </citation>
    <scope>NUCLEOTIDE SEQUENCE [GENOMIC DNA]</scope>
    <source>
        <tissue evidence="6">Wool follicle</tissue>
    </source>
</reference>
<reference evidence="10" key="2">
    <citation type="submission" date="2003-11" db="EMBL/GenBank/DDBJ databases">
        <title>The sequence of sheep keratin intermediate filament-associated protein (KAP3.2) gene.</title>
        <authorList>
            <person name="Itenge T.O."/>
            <person name="Hickford J.G.H."/>
            <person name="Forrest R."/>
        </authorList>
    </citation>
    <scope>NUCLEOTIDE SEQUENCE [GENOMIC DNA]</scope>
</reference>
<reference evidence="8" key="3">
    <citation type="journal article" date="1999" name="J. Invest. Dermatol.">
        <title>Identification of differentially expressed genes during a wool follicle growth cycle induced by prolactin.</title>
        <authorList>
            <person name="Rufaut N.W."/>
            <person name="Pearson A.J."/>
            <person name="Nixon A.J."/>
            <person name="Wheeler T.T."/>
            <person name="Wilkins R.J."/>
        </authorList>
    </citation>
    <scope>TISSUE SPECIFICITY</scope>
</reference>
<name>KRA32_SHEEP</name>
<keyword id="KW-0007">Acetylation</keyword>
<keyword id="KW-0416">Keratin</keyword>
<keyword id="KW-1185">Reference proteome</keyword>
<keyword id="KW-0677">Repeat</keyword>
<dbReference type="EMBL" id="M21099">
    <property type="protein sequence ID" value="AAA31540.1"/>
    <property type="molecule type" value="Genomic_DNA"/>
</dbReference>
<dbReference type="EMBL" id="AY483216">
    <property type="protein sequence ID" value="AAR82895.1"/>
    <property type="molecule type" value="Genomic_DNA"/>
</dbReference>
<dbReference type="PIR" id="I47083">
    <property type="entry name" value="I47083"/>
</dbReference>
<dbReference type="STRING" id="9940.ENSOARP00000000067"/>
<dbReference type="PaxDb" id="9940-ENSOARP00000000067"/>
<dbReference type="Ensembl" id="ENSOART00185054529">
    <property type="protein sequence ID" value="ENSOARP00185027785"/>
    <property type="gene ID" value="ENSOARG00185032751"/>
</dbReference>
<dbReference type="Ensembl" id="ENSOART00215045784">
    <property type="protein sequence ID" value="ENSOARP00215023691"/>
    <property type="gene ID" value="ENSOARG00215027456"/>
</dbReference>
<dbReference type="Ensembl" id="ENSOART00220083073">
    <property type="protein sequence ID" value="ENSOARP00220044896"/>
    <property type="gene ID" value="ENSOARG00220049909"/>
</dbReference>
<dbReference type="Ensembl" id="ENSOART00225048755">
    <property type="protein sequence ID" value="ENSOARP00225024474"/>
    <property type="gene ID" value="ENSOARG00225029511"/>
</dbReference>
<dbReference type="eggNOG" id="KOG4726">
    <property type="taxonomic scope" value="Eukaryota"/>
</dbReference>
<dbReference type="HOGENOM" id="CLU_2359185_0_0_1"/>
<dbReference type="OMA" id="NPCEPCC"/>
<dbReference type="Proteomes" id="UP000002356">
    <property type="component" value="Chromosome 11"/>
</dbReference>
<dbReference type="Bgee" id="ENSOARG00000000091">
    <property type="expression patterns" value="Expressed in ruminant reticulum"/>
</dbReference>
<dbReference type="GO" id="GO:0005829">
    <property type="term" value="C:cytosol"/>
    <property type="evidence" value="ECO:0007669"/>
    <property type="project" value="UniProtKB-ARBA"/>
</dbReference>
<dbReference type="GO" id="GO:0045095">
    <property type="term" value="C:keratin filament"/>
    <property type="evidence" value="ECO:0007669"/>
    <property type="project" value="InterPro"/>
</dbReference>
<dbReference type="GO" id="GO:0005198">
    <property type="term" value="F:structural molecule activity"/>
    <property type="evidence" value="ECO:0007669"/>
    <property type="project" value="InterPro"/>
</dbReference>
<dbReference type="InterPro" id="IPR007659">
    <property type="entry name" value="Keratin_matx"/>
</dbReference>
<dbReference type="PANTHER" id="PTHR23260">
    <property type="entry name" value="KERATIN ASSOCIATED PROTEIN 3-3-RELATED"/>
    <property type="match status" value="1"/>
</dbReference>
<dbReference type="PANTHER" id="PTHR23260:SF3">
    <property type="entry name" value="KERATIN-ASSOCIATED PROTEIN 3-1"/>
    <property type="match status" value="1"/>
</dbReference>
<dbReference type="Pfam" id="PF04579">
    <property type="entry name" value="Keratin_matx"/>
    <property type="match status" value="1"/>
</dbReference>
<sequence>MACCAPRCCSVRTGPATTICSSDKFCRCGVCLPSTCPHDISLLQPTCCDNSPVPCYVPDTYVPTCFLLNSSHPTPGLSGINLTTFIQPGCENVCEPRC</sequence>
<accession>Q6S343</accession>
<accession>Q28577</accession>
<evidence type="ECO:0000250" key="1"/>
<evidence type="ECO:0000250" key="2">
    <source>
        <dbReference type="UniProtKB" id="P02447"/>
    </source>
</evidence>
<evidence type="ECO:0000250" key="3">
    <source>
        <dbReference type="UniProtKB" id="Q9BYR7"/>
    </source>
</evidence>
<evidence type="ECO:0000255" key="4"/>
<evidence type="ECO:0000269" key="5">
    <source>
    </source>
</evidence>
<evidence type="ECO:0000269" key="6">
    <source>
    </source>
</evidence>
<evidence type="ECO:0000303" key="7">
    <source>
    </source>
</evidence>
<evidence type="ECO:0000305" key="8"/>
<evidence type="ECO:0000312" key="9">
    <source>
        <dbReference type="EMBL" id="AAA31540.1"/>
    </source>
</evidence>
<evidence type="ECO:0000312" key="10">
    <source>
        <dbReference type="EMBL" id="AAR82895.1"/>
    </source>
</evidence>
<protein>
    <recommendedName>
        <fullName evidence="3">Keratin-associated protein 3-2</fullName>
    </recommendedName>
    <alternativeName>
        <fullName evidence="9">BIIIB2 high-sulfur keratin</fullName>
    </alternativeName>
    <alternativeName>
        <fullName evidence="10">High sulfur keratin IF-associated protein 3.2</fullName>
    </alternativeName>
</protein>
<comment type="function">
    <text evidence="1">In the hair cortex, hair keratin intermediate filaments are embedded in an interfilamentous matrix, consisting of hair keratin-associated proteins (KRTAP), which are essential for the formation of a rigid and resistant hair shaft through their extensive disulfide bond cross-linking with abundant cysteine residues of hair keratins. The matrix proteins include the high-sulfur and high-glycine-tyrosine keratins (By similarity).</text>
</comment>
<comment type="subunit">
    <text evidence="1">Interacts with hair keratins.</text>
</comment>
<comment type="tissue specificity">
    <text evidence="5">Localized to the cortical keratogenous zone in wool follicle.</text>
</comment>
<comment type="similarity">
    <text evidence="3">Belongs to the KRTAP type 3 family.</text>
</comment>